<name>RL9_EDWI9</name>
<reference key="1">
    <citation type="submission" date="2009-03" db="EMBL/GenBank/DDBJ databases">
        <title>Complete genome sequence of Edwardsiella ictaluri 93-146.</title>
        <authorList>
            <person name="Williams M.L."/>
            <person name="Gillaspy A.F."/>
            <person name="Dyer D.W."/>
            <person name="Thune R.L."/>
            <person name="Waldbieser G.C."/>
            <person name="Schuster S.C."/>
            <person name="Gipson J."/>
            <person name="Zaitshik J."/>
            <person name="Landry C."/>
            <person name="Lawrence M.L."/>
        </authorList>
    </citation>
    <scope>NUCLEOTIDE SEQUENCE [LARGE SCALE GENOMIC DNA]</scope>
    <source>
        <strain>93-146</strain>
    </source>
</reference>
<evidence type="ECO:0000255" key="1">
    <source>
        <dbReference type="HAMAP-Rule" id="MF_00503"/>
    </source>
</evidence>
<evidence type="ECO:0000305" key="2"/>
<accession>C5BF79</accession>
<proteinExistence type="inferred from homology"/>
<organism>
    <name type="scientific">Edwardsiella ictaluri (strain 93-146)</name>
    <dbReference type="NCBI Taxonomy" id="634503"/>
    <lineage>
        <taxon>Bacteria</taxon>
        <taxon>Pseudomonadati</taxon>
        <taxon>Pseudomonadota</taxon>
        <taxon>Gammaproteobacteria</taxon>
        <taxon>Enterobacterales</taxon>
        <taxon>Hafniaceae</taxon>
        <taxon>Edwardsiella</taxon>
    </lineage>
</organism>
<sequence>MQVILLDKVANLGSLGDQVNVKAGYARNFLVPMGKAVPATKKNVEFFEARRADLEAKLAETLSAAEARAVKINELATVTIASKAGDEGKLFGSIGTRDIADAVTAAGVAVTKSEVRLPNGVLRTLGDHEVHFQVHSDVFAQLNVVVVAE</sequence>
<protein>
    <recommendedName>
        <fullName evidence="1">Large ribosomal subunit protein bL9</fullName>
    </recommendedName>
    <alternativeName>
        <fullName evidence="2">50S ribosomal protein L9</fullName>
    </alternativeName>
</protein>
<dbReference type="EMBL" id="CP001600">
    <property type="protein sequence ID" value="ACR67665.1"/>
    <property type="molecule type" value="Genomic_DNA"/>
</dbReference>
<dbReference type="RefSeq" id="WP_015869868.1">
    <property type="nucleotide sequence ID" value="NZ_CP169062.1"/>
</dbReference>
<dbReference type="SMR" id="C5BF79"/>
<dbReference type="STRING" id="67780.B6E78_12905"/>
<dbReference type="GeneID" id="69537516"/>
<dbReference type="KEGG" id="eic:NT01EI_0427"/>
<dbReference type="PATRIC" id="fig|634503.3.peg.386"/>
<dbReference type="HOGENOM" id="CLU_078938_4_1_6"/>
<dbReference type="OrthoDB" id="9788336at2"/>
<dbReference type="Proteomes" id="UP000001485">
    <property type="component" value="Chromosome"/>
</dbReference>
<dbReference type="GO" id="GO:1990904">
    <property type="term" value="C:ribonucleoprotein complex"/>
    <property type="evidence" value="ECO:0007669"/>
    <property type="project" value="UniProtKB-KW"/>
</dbReference>
<dbReference type="GO" id="GO:0005840">
    <property type="term" value="C:ribosome"/>
    <property type="evidence" value="ECO:0007669"/>
    <property type="project" value="UniProtKB-KW"/>
</dbReference>
<dbReference type="GO" id="GO:0019843">
    <property type="term" value="F:rRNA binding"/>
    <property type="evidence" value="ECO:0007669"/>
    <property type="project" value="UniProtKB-UniRule"/>
</dbReference>
<dbReference type="GO" id="GO:0003735">
    <property type="term" value="F:structural constituent of ribosome"/>
    <property type="evidence" value="ECO:0007669"/>
    <property type="project" value="InterPro"/>
</dbReference>
<dbReference type="GO" id="GO:0006412">
    <property type="term" value="P:translation"/>
    <property type="evidence" value="ECO:0007669"/>
    <property type="project" value="UniProtKB-UniRule"/>
</dbReference>
<dbReference type="FunFam" id="3.10.430.100:FF:000001">
    <property type="entry name" value="50S ribosomal protein L9"/>
    <property type="match status" value="1"/>
</dbReference>
<dbReference type="FunFam" id="3.40.5.10:FF:000001">
    <property type="entry name" value="50S ribosomal protein L9"/>
    <property type="match status" value="1"/>
</dbReference>
<dbReference type="Gene3D" id="3.10.430.100">
    <property type="entry name" value="Ribosomal protein L9, C-terminal domain"/>
    <property type="match status" value="1"/>
</dbReference>
<dbReference type="Gene3D" id="3.40.5.10">
    <property type="entry name" value="Ribosomal protein L9, N-terminal domain"/>
    <property type="match status" value="1"/>
</dbReference>
<dbReference type="HAMAP" id="MF_00503">
    <property type="entry name" value="Ribosomal_bL9"/>
    <property type="match status" value="1"/>
</dbReference>
<dbReference type="InterPro" id="IPR000244">
    <property type="entry name" value="Ribosomal_bL9"/>
</dbReference>
<dbReference type="InterPro" id="IPR009027">
    <property type="entry name" value="Ribosomal_bL9/RNase_H1_N"/>
</dbReference>
<dbReference type="InterPro" id="IPR020594">
    <property type="entry name" value="Ribosomal_bL9_bac/chp"/>
</dbReference>
<dbReference type="InterPro" id="IPR020069">
    <property type="entry name" value="Ribosomal_bL9_C"/>
</dbReference>
<dbReference type="InterPro" id="IPR036791">
    <property type="entry name" value="Ribosomal_bL9_C_sf"/>
</dbReference>
<dbReference type="InterPro" id="IPR020070">
    <property type="entry name" value="Ribosomal_bL9_N"/>
</dbReference>
<dbReference type="InterPro" id="IPR036935">
    <property type="entry name" value="Ribosomal_bL9_N_sf"/>
</dbReference>
<dbReference type="NCBIfam" id="TIGR00158">
    <property type="entry name" value="L9"/>
    <property type="match status" value="1"/>
</dbReference>
<dbReference type="PANTHER" id="PTHR21368">
    <property type="entry name" value="50S RIBOSOMAL PROTEIN L9"/>
    <property type="match status" value="1"/>
</dbReference>
<dbReference type="Pfam" id="PF03948">
    <property type="entry name" value="Ribosomal_L9_C"/>
    <property type="match status" value="1"/>
</dbReference>
<dbReference type="Pfam" id="PF01281">
    <property type="entry name" value="Ribosomal_L9_N"/>
    <property type="match status" value="1"/>
</dbReference>
<dbReference type="SUPFAM" id="SSF55658">
    <property type="entry name" value="L9 N-domain-like"/>
    <property type="match status" value="1"/>
</dbReference>
<dbReference type="SUPFAM" id="SSF55653">
    <property type="entry name" value="Ribosomal protein L9 C-domain"/>
    <property type="match status" value="1"/>
</dbReference>
<dbReference type="PROSITE" id="PS00651">
    <property type="entry name" value="RIBOSOMAL_L9"/>
    <property type="match status" value="1"/>
</dbReference>
<keyword id="KW-0687">Ribonucleoprotein</keyword>
<keyword id="KW-0689">Ribosomal protein</keyword>
<keyword id="KW-0694">RNA-binding</keyword>
<keyword id="KW-0699">rRNA-binding</keyword>
<feature type="chain" id="PRO_1000206546" description="Large ribosomal subunit protein bL9">
    <location>
        <begin position="1"/>
        <end position="149"/>
    </location>
</feature>
<gene>
    <name evidence="1" type="primary">rplI</name>
    <name type="ordered locus">NT01EI_0427</name>
</gene>
<comment type="function">
    <text evidence="1">Binds to the 23S rRNA.</text>
</comment>
<comment type="similarity">
    <text evidence="1">Belongs to the bacterial ribosomal protein bL9 family.</text>
</comment>